<accession>Q04ZJ6</accession>
<proteinExistence type="inferred from homology"/>
<evidence type="ECO:0000255" key="1">
    <source>
        <dbReference type="HAMAP-Rule" id="MF_00003"/>
    </source>
</evidence>
<dbReference type="EMBL" id="CP000348">
    <property type="protein sequence ID" value="ABJ79499.1"/>
    <property type="molecule type" value="Genomic_DNA"/>
</dbReference>
<dbReference type="RefSeq" id="WP_002726152.1">
    <property type="nucleotide sequence ID" value="NC_008508.1"/>
</dbReference>
<dbReference type="SMR" id="Q04ZJ6"/>
<dbReference type="GeneID" id="61174754"/>
<dbReference type="KEGG" id="lbl:LBL_2086"/>
<dbReference type="HOGENOM" id="CLU_089475_5_1_12"/>
<dbReference type="GO" id="GO:0005829">
    <property type="term" value="C:cytosol"/>
    <property type="evidence" value="ECO:0007669"/>
    <property type="project" value="TreeGrafter"/>
</dbReference>
<dbReference type="GO" id="GO:0043024">
    <property type="term" value="F:ribosomal small subunit binding"/>
    <property type="evidence" value="ECO:0007669"/>
    <property type="project" value="TreeGrafter"/>
</dbReference>
<dbReference type="GO" id="GO:0030490">
    <property type="term" value="P:maturation of SSU-rRNA"/>
    <property type="evidence" value="ECO:0007669"/>
    <property type="project" value="UniProtKB-UniRule"/>
</dbReference>
<dbReference type="FunFam" id="3.30.300.20:FF:000026">
    <property type="entry name" value="Ribosome-binding factor A"/>
    <property type="match status" value="1"/>
</dbReference>
<dbReference type="Gene3D" id="3.30.300.20">
    <property type="match status" value="1"/>
</dbReference>
<dbReference type="HAMAP" id="MF_00003">
    <property type="entry name" value="RbfA"/>
    <property type="match status" value="1"/>
</dbReference>
<dbReference type="InterPro" id="IPR015946">
    <property type="entry name" value="KH_dom-like_a/b"/>
</dbReference>
<dbReference type="InterPro" id="IPR000238">
    <property type="entry name" value="RbfA"/>
</dbReference>
<dbReference type="InterPro" id="IPR023799">
    <property type="entry name" value="RbfA_dom_sf"/>
</dbReference>
<dbReference type="InterPro" id="IPR020053">
    <property type="entry name" value="Ribosome-bd_factorA_CS"/>
</dbReference>
<dbReference type="NCBIfam" id="TIGR00082">
    <property type="entry name" value="rbfA"/>
    <property type="match status" value="1"/>
</dbReference>
<dbReference type="PANTHER" id="PTHR33515">
    <property type="entry name" value="RIBOSOME-BINDING FACTOR A, CHLOROPLASTIC-RELATED"/>
    <property type="match status" value="1"/>
</dbReference>
<dbReference type="PANTHER" id="PTHR33515:SF1">
    <property type="entry name" value="RIBOSOME-BINDING FACTOR A, CHLOROPLASTIC-RELATED"/>
    <property type="match status" value="1"/>
</dbReference>
<dbReference type="Pfam" id="PF02033">
    <property type="entry name" value="RBFA"/>
    <property type="match status" value="1"/>
</dbReference>
<dbReference type="SUPFAM" id="SSF89919">
    <property type="entry name" value="Ribosome-binding factor A, RbfA"/>
    <property type="match status" value="1"/>
</dbReference>
<dbReference type="PROSITE" id="PS01319">
    <property type="entry name" value="RBFA"/>
    <property type="match status" value="1"/>
</dbReference>
<organism>
    <name type="scientific">Leptospira borgpetersenii serovar Hardjo-bovis (strain L550)</name>
    <dbReference type="NCBI Taxonomy" id="355276"/>
    <lineage>
        <taxon>Bacteria</taxon>
        <taxon>Pseudomonadati</taxon>
        <taxon>Spirochaetota</taxon>
        <taxon>Spirochaetia</taxon>
        <taxon>Leptospirales</taxon>
        <taxon>Leptospiraceae</taxon>
        <taxon>Leptospira</taxon>
    </lineage>
</organism>
<protein>
    <recommendedName>
        <fullName evidence="1">Ribosome-binding factor A</fullName>
    </recommendedName>
</protein>
<feature type="chain" id="PRO_1000000133" description="Ribosome-binding factor A">
    <location>
        <begin position="1"/>
        <end position="117"/>
    </location>
</feature>
<sequence length="117" mass="13201">MNPIRRRKIEAEAVRTVAMMILSGKVKDPRVHMVSVHRAEISEDGKNMKVFVTAICTDKKKLKVLSGLNSAAGLFQTTLSGKLGLRITPRMQFLWDEEYIQSLDESLRLTRKPTSAD</sequence>
<keyword id="KW-0963">Cytoplasm</keyword>
<keyword id="KW-0690">Ribosome biogenesis</keyword>
<gene>
    <name evidence="1" type="primary">rbfA</name>
    <name type="ordered locus">LBL_2086</name>
</gene>
<comment type="function">
    <text evidence="1">One of several proteins that assist in the late maturation steps of the functional core of the 30S ribosomal subunit. Associates with free 30S ribosomal subunits (but not with 30S subunits that are part of 70S ribosomes or polysomes). Required for efficient processing of 16S rRNA. May interact with the 5'-terminal helix region of 16S rRNA.</text>
</comment>
<comment type="subunit">
    <text evidence="1">Monomer. Binds 30S ribosomal subunits, but not 50S ribosomal subunits or 70S ribosomes.</text>
</comment>
<comment type="subcellular location">
    <subcellularLocation>
        <location evidence="1">Cytoplasm</location>
    </subcellularLocation>
</comment>
<comment type="similarity">
    <text evidence="1">Belongs to the RbfA family.</text>
</comment>
<reference key="1">
    <citation type="journal article" date="2006" name="Proc. Natl. Acad. Sci. U.S.A.">
        <title>Genome reduction in Leptospira borgpetersenii reflects limited transmission potential.</title>
        <authorList>
            <person name="Bulach D.M."/>
            <person name="Zuerner R.L."/>
            <person name="Wilson P."/>
            <person name="Seemann T."/>
            <person name="McGrath A."/>
            <person name="Cullen P.A."/>
            <person name="Davis J."/>
            <person name="Johnson M."/>
            <person name="Kuczek E."/>
            <person name="Alt D.P."/>
            <person name="Peterson-Burch B."/>
            <person name="Coppel R.L."/>
            <person name="Rood J.I."/>
            <person name="Davies J.K."/>
            <person name="Adler B."/>
        </authorList>
    </citation>
    <scope>NUCLEOTIDE SEQUENCE [LARGE SCALE GENOMIC DNA]</scope>
    <source>
        <strain>L550</strain>
    </source>
</reference>
<name>RBFA_LEPBL</name>